<keyword id="KW-0067">ATP-binding</keyword>
<keyword id="KW-0418">Kinase</keyword>
<keyword id="KW-0460">Magnesium</keyword>
<keyword id="KW-0479">Metal-binding</keyword>
<keyword id="KW-0547">Nucleotide-binding</keyword>
<keyword id="KW-1185">Reference proteome</keyword>
<keyword id="KW-0711">Selenium</keyword>
<keyword id="KW-0808">Transferase</keyword>
<evidence type="ECO:0000255" key="1">
    <source>
        <dbReference type="HAMAP-Rule" id="MF_00625"/>
    </source>
</evidence>
<name>SELD_PHOPR</name>
<accession>Q6LP05</accession>
<reference key="1">
    <citation type="journal article" date="2005" name="Science">
        <title>Life at depth: Photobacterium profundum genome sequence and expression analysis.</title>
        <authorList>
            <person name="Vezzi A."/>
            <person name="Campanaro S."/>
            <person name="D'Angelo M."/>
            <person name="Simonato F."/>
            <person name="Vitulo N."/>
            <person name="Lauro F.M."/>
            <person name="Cestaro A."/>
            <person name="Malacrida G."/>
            <person name="Simionati B."/>
            <person name="Cannata N."/>
            <person name="Romualdi C."/>
            <person name="Bartlett D.H."/>
            <person name="Valle G."/>
        </authorList>
    </citation>
    <scope>NUCLEOTIDE SEQUENCE [LARGE SCALE GENOMIC DNA]</scope>
    <source>
        <strain>ATCC BAA-1253 / SS9</strain>
    </source>
</reference>
<organism>
    <name type="scientific">Photobacterium profundum (strain SS9)</name>
    <dbReference type="NCBI Taxonomy" id="298386"/>
    <lineage>
        <taxon>Bacteria</taxon>
        <taxon>Pseudomonadati</taxon>
        <taxon>Pseudomonadota</taxon>
        <taxon>Gammaproteobacteria</taxon>
        <taxon>Vibrionales</taxon>
        <taxon>Vibrionaceae</taxon>
        <taxon>Photobacterium</taxon>
    </lineage>
</organism>
<feature type="chain" id="PRO_0000127630" description="Selenide, water dikinase">
    <location>
        <begin position="1"/>
        <end position="346"/>
    </location>
</feature>
<feature type="active site" evidence="1">
    <location>
        <position position="15"/>
    </location>
</feature>
<feature type="binding site" description="in other chain" evidence="1">
    <location>
        <position position="18"/>
    </location>
    <ligand>
        <name>ATP</name>
        <dbReference type="ChEBI" id="CHEBI:30616"/>
        <note>ligand shared between dimeric partners</note>
    </ligand>
</feature>
<feature type="binding site" description="in other chain" evidence="1">
    <location>
        <begin position="46"/>
        <end position="48"/>
    </location>
    <ligand>
        <name>ATP</name>
        <dbReference type="ChEBI" id="CHEBI:30616"/>
        <note>ligand shared between dimeric partners</note>
    </ligand>
</feature>
<feature type="binding site" evidence="1">
    <location>
        <position position="49"/>
    </location>
    <ligand>
        <name>Mg(2+)</name>
        <dbReference type="ChEBI" id="CHEBI:18420"/>
    </ligand>
</feature>
<feature type="binding site" description="in other chain" evidence="1">
    <location>
        <position position="66"/>
    </location>
    <ligand>
        <name>ATP</name>
        <dbReference type="ChEBI" id="CHEBI:30616"/>
        <note>ligand shared between dimeric partners</note>
    </ligand>
</feature>
<feature type="binding site" description="in other chain" evidence="1">
    <location>
        <position position="89"/>
    </location>
    <ligand>
        <name>ATP</name>
        <dbReference type="ChEBI" id="CHEBI:30616"/>
        <note>ligand shared between dimeric partners</note>
    </ligand>
</feature>
<feature type="binding site" evidence="1">
    <location>
        <position position="89"/>
    </location>
    <ligand>
        <name>Mg(2+)</name>
        <dbReference type="ChEBI" id="CHEBI:18420"/>
    </ligand>
</feature>
<feature type="binding site" evidence="1">
    <location>
        <begin position="137"/>
        <end position="139"/>
    </location>
    <ligand>
        <name>ATP</name>
        <dbReference type="ChEBI" id="CHEBI:30616"/>
        <note>ligand shared between dimeric partners</note>
    </ligand>
</feature>
<feature type="binding site" evidence="1">
    <location>
        <position position="225"/>
    </location>
    <ligand>
        <name>Mg(2+)</name>
        <dbReference type="ChEBI" id="CHEBI:18420"/>
    </ligand>
</feature>
<feature type="site" description="Important for catalytic activity" evidence="1">
    <location>
        <position position="18"/>
    </location>
</feature>
<proteinExistence type="inferred from homology"/>
<gene>
    <name evidence="1" type="primary">selD</name>
    <name type="ordered locus">PBPRA2592</name>
</gene>
<protein>
    <recommendedName>
        <fullName evidence="1">Selenide, water dikinase</fullName>
        <ecNumber evidence="1">2.7.9.3</ecNumber>
    </recommendedName>
    <alternativeName>
        <fullName evidence="1">Selenium donor protein</fullName>
    </alternativeName>
    <alternativeName>
        <fullName evidence="1">Selenophosphate synthase</fullName>
    </alternativeName>
</protein>
<comment type="function">
    <text evidence="1">Synthesizes selenophosphate from selenide and ATP.</text>
</comment>
<comment type="catalytic activity">
    <reaction evidence="1">
        <text>hydrogenselenide + ATP + H2O = selenophosphate + AMP + phosphate + 2 H(+)</text>
        <dbReference type="Rhea" id="RHEA:18737"/>
        <dbReference type="ChEBI" id="CHEBI:15377"/>
        <dbReference type="ChEBI" id="CHEBI:15378"/>
        <dbReference type="ChEBI" id="CHEBI:16144"/>
        <dbReference type="ChEBI" id="CHEBI:29317"/>
        <dbReference type="ChEBI" id="CHEBI:30616"/>
        <dbReference type="ChEBI" id="CHEBI:43474"/>
        <dbReference type="ChEBI" id="CHEBI:456215"/>
        <dbReference type="EC" id="2.7.9.3"/>
    </reaction>
</comment>
<comment type="cofactor">
    <cofactor evidence="1">
        <name>Mg(2+)</name>
        <dbReference type="ChEBI" id="CHEBI:18420"/>
    </cofactor>
    <text evidence="1">Binds 1 Mg(2+) ion per monomer.</text>
</comment>
<comment type="subunit">
    <text evidence="1">Homodimer.</text>
</comment>
<comment type="similarity">
    <text evidence="1">Belongs to the selenophosphate synthase 1 family. Class I subfamily.</text>
</comment>
<dbReference type="EC" id="2.7.9.3" evidence="1"/>
<dbReference type="EMBL" id="CR378671">
    <property type="protein sequence ID" value="CAG20971.1"/>
    <property type="molecule type" value="Genomic_DNA"/>
</dbReference>
<dbReference type="SMR" id="Q6LP05"/>
<dbReference type="STRING" id="298386.PBPRA2592"/>
<dbReference type="KEGG" id="ppr:PBPRA2592"/>
<dbReference type="eggNOG" id="COG0709">
    <property type="taxonomic scope" value="Bacteria"/>
</dbReference>
<dbReference type="HOGENOM" id="CLU_032859_0_1_6"/>
<dbReference type="Proteomes" id="UP000000593">
    <property type="component" value="Chromosome 1"/>
</dbReference>
<dbReference type="GO" id="GO:0005737">
    <property type="term" value="C:cytoplasm"/>
    <property type="evidence" value="ECO:0007669"/>
    <property type="project" value="TreeGrafter"/>
</dbReference>
<dbReference type="GO" id="GO:0005524">
    <property type="term" value="F:ATP binding"/>
    <property type="evidence" value="ECO:0007669"/>
    <property type="project" value="UniProtKB-UniRule"/>
</dbReference>
<dbReference type="GO" id="GO:0000287">
    <property type="term" value="F:magnesium ion binding"/>
    <property type="evidence" value="ECO:0007669"/>
    <property type="project" value="UniProtKB-UniRule"/>
</dbReference>
<dbReference type="GO" id="GO:0004756">
    <property type="term" value="F:selenide, water dikinase activity"/>
    <property type="evidence" value="ECO:0007669"/>
    <property type="project" value="UniProtKB-UniRule"/>
</dbReference>
<dbReference type="GO" id="GO:0016260">
    <property type="term" value="P:selenocysteine biosynthetic process"/>
    <property type="evidence" value="ECO:0007669"/>
    <property type="project" value="InterPro"/>
</dbReference>
<dbReference type="CDD" id="cd02195">
    <property type="entry name" value="SelD"/>
    <property type="match status" value="1"/>
</dbReference>
<dbReference type="FunFam" id="3.30.1330.10:FF:000003">
    <property type="entry name" value="Selenide, water dikinase"/>
    <property type="match status" value="1"/>
</dbReference>
<dbReference type="FunFam" id="3.90.650.10:FF:000004">
    <property type="entry name" value="Selenide, water dikinase"/>
    <property type="match status" value="1"/>
</dbReference>
<dbReference type="Gene3D" id="3.90.650.10">
    <property type="entry name" value="PurM-like C-terminal domain"/>
    <property type="match status" value="1"/>
</dbReference>
<dbReference type="Gene3D" id="3.30.1330.10">
    <property type="entry name" value="PurM-like, N-terminal domain"/>
    <property type="match status" value="1"/>
</dbReference>
<dbReference type="HAMAP" id="MF_00625">
    <property type="entry name" value="SelD"/>
    <property type="match status" value="1"/>
</dbReference>
<dbReference type="InterPro" id="IPR010918">
    <property type="entry name" value="PurM-like_C_dom"/>
</dbReference>
<dbReference type="InterPro" id="IPR036676">
    <property type="entry name" value="PurM-like_C_sf"/>
</dbReference>
<dbReference type="InterPro" id="IPR016188">
    <property type="entry name" value="PurM-like_N"/>
</dbReference>
<dbReference type="InterPro" id="IPR036921">
    <property type="entry name" value="PurM-like_N_sf"/>
</dbReference>
<dbReference type="InterPro" id="IPR023061">
    <property type="entry name" value="SelD_I"/>
</dbReference>
<dbReference type="InterPro" id="IPR004536">
    <property type="entry name" value="SPS/SelD"/>
</dbReference>
<dbReference type="NCBIfam" id="NF002098">
    <property type="entry name" value="PRK00943.1"/>
    <property type="match status" value="1"/>
</dbReference>
<dbReference type="NCBIfam" id="TIGR00476">
    <property type="entry name" value="selD"/>
    <property type="match status" value="1"/>
</dbReference>
<dbReference type="PANTHER" id="PTHR10256:SF0">
    <property type="entry name" value="INACTIVE SELENIDE, WATER DIKINASE-LIKE PROTEIN-RELATED"/>
    <property type="match status" value="1"/>
</dbReference>
<dbReference type="PANTHER" id="PTHR10256">
    <property type="entry name" value="SELENIDE, WATER DIKINASE"/>
    <property type="match status" value="1"/>
</dbReference>
<dbReference type="Pfam" id="PF00586">
    <property type="entry name" value="AIRS"/>
    <property type="match status" value="1"/>
</dbReference>
<dbReference type="Pfam" id="PF02769">
    <property type="entry name" value="AIRS_C"/>
    <property type="match status" value="1"/>
</dbReference>
<dbReference type="PIRSF" id="PIRSF036407">
    <property type="entry name" value="Selenphspht_syn"/>
    <property type="match status" value="1"/>
</dbReference>
<dbReference type="SUPFAM" id="SSF56042">
    <property type="entry name" value="PurM C-terminal domain-like"/>
    <property type="match status" value="1"/>
</dbReference>
<dbReference type="SUPFAM" id="SSF55326">
    <property type="entry name" value="PurM N-terminal domain-like"/>
    <property type="match status" value="1"/>
</dbReference>
<sequence>MENVRLTQYSHGAGCGCKISPQVLDTILRTQLAPFSDPNLLVGNESKDDAAVYDLGNGTAAISTTDFFMPIVDDPFDFGRIAATNAISDIYAMGGKPIMAIAILGWPVNVLAPEIAQQVIEGGRSVCREAGISLAGGHSIDAPEPIFGLAVTGIVDTDRVKRNNRAENGCKLYLTKPLGIGVLTTAEKQSKLADEHKGLARDWMCKLNIPGQDFANVEGVKAMTDVTGFGLMGHLSEICEGSQLKARVDFDSVPYLPGVFDYIAQGCVPGGTTRNFDSYGQKLGAMTEQQKALLCDPQTSGGLLIAVTPDAETEQQLQAIAARHNIELQAIGEMMPLDGDTLIEIC</sequence>